<accession>Q9ZNT0</accession>
<accession>Q8LAK9</accession>
<proteinExistence type="evidence at protein level"/>
<organism evidence="21">
    <name type="scientific">Arabidopsis thaliana</name>
    <name type="common">Mouse-ear cress</name>
    <dbReference type="NCBI Taxonomy" id="3702"/>
    <lineage>
        <taxon>Eukaryota</taxon>
        <taxon>Viridiplantae</taxon>
        <taxon>Streptophyta</taxon>
        <taxon>Embryophyta</taxon>
        <taxon>Tracheophyta</taxon>
        <taxon>Spermatophyta</taxon>
        <taxon>Magnoliopsida</taxon>
        <taxon>eudicotyledons</taxon>
        <taxon>Gunneridae</taxon>
        <taxon>Pentapetalae</taxon>
        <taxon>rosids</taxon>
        <taxon>malvids</taxon>
        <taxon>Brassicales</taxon>
        <taxon>Brassicaceae</taxon>
        <taxon>Camelineae</taxon>
        <taxon>Arabidopsis</taxon>
    </lineage>
</organism>
<reference key="1">
    <citation type="journal article" date="1999" name="Nature">
        <title>Sequence and analysis of chromosome 2 of the plant Arabidopsis thaliana.</title>
        <authorList>
            <person name="Lin X."/>
            <person name="Kaul S."/>
            <person name="Rounsley S.D."/>
            <person name="Shea T.P."/>
            <person name="Benito M.-I."/>
            <person name="Town C.D."/>
            <person name="Fujii C.Y."/>
            <person name="Mason T.M."/>
            <person name="Bowman C.L."/>
            <person name="Barnstead M.E."/>
            <person name="Feldblyum T.V."/>
            <person name="Buell C.R."/>
            <person name="Ketchum K.A."/>
            <person name="Lee J.J."/>
            <person name="Ronning C.M."/>
            <person name="Koo H.L."/>
            <person name="Moffat K.S."/>
            <person name="Cronin L.A."/>
            <person name="Shen M."/>
            <person name="Pai G."/>
            <person name="Van Aken S."/>
            <person name="Umayam L."/>
            <person name="Tallon L.J."/>
            <person name="Gill J.E."/>
            <person name="Adams M.D."/>
            <person name="Carrera A.J."/>
            <person name="Creasy T.H."/>
            <person name="Goodman H.M."/>
            <person name="Somerville C.R."/>
            <person name="Copenhaver G.P."/>
            <person name="Preuss D."/>
            <person name="Nierman W.C."/>
            <person name="White O."/>
            <person name="Eisen J.A."/>
            <person name="Salzberg S.L."/>
            <person name="Fraser C.M."/>
            <person name="Venter J.C."/>
        </authorList>
    </citation>
    <scope>NUCLEOTIDE SEQUENCE [LARGE SCALE GENOMIC DNA]</scope>
    <source>
        <strain>cv. Columbia</strain>
    </source>
</reference>
<reference key="2">
    <citation type="journal article" date="2017" name="Plant J.">
        <title>Araport11: a complete reannotation of the Arabidopsis thaliana reference genome.</title>
        <authorList>
            <person name="Cheng C.Y."/>
            <person name="Krishnakumar V."/>
            <person name="Chan A.P."/>
            <person name="Thibaud-Nissen F."/>
            <person name="Schobel S."/>
            <person name="Town C.D."/>
        </authorList>
    </citation>
    <scope>GENOME REANNOTATION</scope>
    <source>
        <strain>cv. Columbia</strain>
    </source>
</reference>
<reference key="3">
    <citation type="journal article" date="2003" name="Science">
        <title>Empirical analysis of transcriptional activity in the Arabidopsis genome.</title>
        <authorList>
            <person name="Yamada K."/>
            <person name="Lim J."/>
            <person name="Dale J.M."/>
            <person name="Chen H."/>
            <person name="Shinn P."/>
            <person name="Palm C.J."/>
            <person name="Southwick A.M."/>
            <person name="Wu H.C."/>
            <person name="Kim C.J."/>
            <person name="Nguyen M."/>
            <person name="Pham P.K."/>
            <person name="Cheuk R.F."/>
            <person name="Karlin-Newmann G."/>
            <person name="Liu S.X."/>
            <person name="Lam B."/>
            <person name="Sakano H."/>
            <person name="Wu T."/>
            <person name="Yu G."/>
            <person name="Miranda M."/>
            <person name="Quach H.L."/>
            <person name="Tripp M."/>
            <person name="Chang C.H."/>
            <person name="Lee J.M."/>
            <person name="Toriumi M.J."/>
            <person name="Chan M.M."/>
            <person name="Tang C.C."/>
            <person name="Onodera C.S."/>
            <person name="Deng J.M."/>
            <person name="Akiyama K."/>
            <person name="Ansari Y."/>
            <person name="Arakawa T."/>
            <person name="Banh J."/>
            <person name="Banno F."/>
            <person name="Bowser L."/>
            <person name="Brooks S.Y."/>
            <person name="Carninci P."/>
            <person name="Chao Q."/>
            <person name="Choy N."/>
            <person name="Enju A."/>
            <person name="Goldsmith A.D."/>
            <person name="Gurjal M."/>
            <person name="Hansen N.F."/>
            <person name="Hayashizaki Y."/>
            <person name="Johnson-Hopson C."/>
            <person name="Hsuan V.W."/>
            <person name="Iida K."/>
            <person name="Karnes M."/>
            <person name="Khan S."/>
            <person name="Koesema E."/>
            <person name="Ishida J."/>
            <person name="Jiang P.X."/>
            <person name="Jones T."/>
            <person name="Kawai J."/>
            <person name="Kamiya A."/>
            <person name="Meyers C."/>
            <person name="Nakajima M."/>
            <person name="Narusaka M."/>
            <person name="Seki M."/>
            <person name="Sakurai T."/>
            <person name="Satou M."/>
            <person name="Tamse R."/>
            <person name="Vaysberg M."/>
            <person name="Wallender E.K."/>
            <person name="Wong C."/>
            <person name="Yamamura Y."/>
            <person name="Yuan S."/>
            <person name="Shinozaki K."/>
            <person name="Davis R.W."/>
            <person name="Theologis A."/>
            <person name="Ecker J.R."/>
        </authorList>
    </citation>
    <scope>NUCLEOTIDE SEQUENCE [LARGE SCALE MRNA]</scope>
    <source>
        <strain>cv. Columbia</strain>
    </source>
</reference>
<reference key="4">
    <citation type="submission" date="2002-03" db="EMBL/GenBank/DDBJ databases">
        <title>Full-length cDNA from Arabidopsis thaliana.</title>
        <authorList>
            <person name="Brover V.V."/>
            <person name="Troukhan M.E."/>
            <person name="Alexandrov N.A."/>
            <person name="Lu Y.-P."/>
            <person name="Flavell R.B."/>
            <person name="Feldmann K.A."/>
        </authorList>
    </citation>
    <scope>NUCLEOTIDE SEQUENCE [LARGE SCALE MRNA]</scope>
</reference>
<reference key="5">
    <citation type="journal article" date="2007" name="Plant Cell">
        <title>The Arabidopsis AAA ATPase SKD1 is involved in multivesicular endosome function and interacts with its positive regulator LYST-INTERACTING PROTEIN5.</title>
        <authorList>
            <person name="Haas T.J."/>
            <person name="Sliwinski M.K."/>
            <person name="Martinez D.E."/>
            <person name="Preuss M."/>
            <person name="Ebine K."/>
            <person name="Ueda T."/>
            <person name="Nielsen E."/>
            <person name="Odorizzi G."/>
            <person name="Otegui M.S."/>
        </authorList>
    </citation>
    <scope>FUNCTION</scope>
    <scope>MUTAGENESIS OF GLU-232</scope>
    <scope>TISSUE SPECIFICITY</scope>
    <scope>SUBCELLULAR LOCATION</scope>
    <scope>INTERACTION WITH LIP5</scope>
    <scope>CATALYTIC ACTIVITY</scope>
    <scope>ACTIVITY REGULATION</scope>
    <source>
        <strain>cv. Columbia</strain>
    </source>
</reference>
<reference key="6">
    <citation type="journal article" date="2009" name="Plant Cell">
        <title>The ESCRT-related CHMP1A and B proteins mediate multivesicular body sorting of auxin carriers in Arabidopsis and are required for plant development.</title>
        <authorList>
            <person name="Spitzer C."/>
            <person name="Reyes F.C."/>
            <person name="Buono R."/>
            <person name="Sliwinski M.K."/>
            <person name="Haas T.J."/>
            <person name="Otegui M.S."/>
        </authorList>
    </citation>
    <scope>INTERACTION WITH CHMP1A</scope>
</reference>
<reference key="7">
    <citation type="journal article" date="2010" name="Plant J.">
        <title>The AAA-type ATPase AtSKD1 contributes to vacuolar maintenance of Arabidopsis thaliana.</title>
        <authorList>
            <person name="Shahriari M."/>
            <person name="Keshavaiah C."/>
            <person name="Scheuring D."/>
            <person name="Sabovljevic A."/>
            <person name="Pimpl P."/>
            <person name="Haeusler R.E."/>
            <person name="Huelskamp M."/>
            <person name="Schellmann S."/>
        </authorList>
    </citation>
    <scope>FUNCTION</scope>
    <scope>DISRUPTION PHENOTYPE</scope>
    <scope>MUTAGENESIS OF LYS-178 AND GLU-232</scope>
    <scope>CATALYTIC ACTIVITY</scope>
    <scope>BIOPHYSICOCHEMICAL PROPERTIES</scope>
    <scope>TISSUE SPECIFICITY</scope>
    <scope>SUBCELLULAR LOCATION</scope>
    <scope>SUBUNIT</scope>
    <scope>INTERACTION WITH LIP5; VPS20.1; VPS20.2; VPS24-1; VPS32.1; VPS32.2; CHMP1A AND VPS60-1</scope>
    <source>
        <strain>cv. Columbia</strain>
    </source>
</reference>
<reference key="8">
    <citation type="journal article" date="2010" name="Plant Signal. Behav.">
        <title>Seeds of Arabidopsis plants expressing dominant-negative AtSKD1 under control of the GL2 promoter show a transparent testa phenotype and a mucilage defect.</title>
        <authorList>
            <person name="Shahriari M."/>
            <person name="Hulskamp M."/>
            <person name="Schellmann S."/>
        </authorList>
    </citation>
    <scope>FUNCTION</scope>
    <scope>MUTAGENESIS OF LYS-178 AND GLU-232</scope>
    <source>
        <strain>cv. Columbia</strain>
    </source>
</reference>
<reference key="9">
    <citation type="journal article" date="2011" name="Plant Cell">
        <title>The Arabidopsis deubiquitinating enzyme AMSH3 interacts with ESCRT-III subunits and regulates their localization.</title>
        <authorList>
            <person name="Katsiarimpa A."/>
            <person name="Anzenberger F."/>
            <person name="Schlager N."/>
            <person name="Neubert S."/>
            <person name="Hauser M.T."/>
            <person name="Schwechheimer C."/>
            <person name="Isono E."/>
        </authorList>
    </citation>
    <scope>FUNCTION</scope>
    <scope>DISRUPTION PHENOTYPE</scope>
    <scope>INTERACTION WITH VPS2.1</scope>
</reference>
<reference key="10">
    <citation type="journal article" date="2012" name="Planta">
        <title>Artificial ubiquitylation is sufficient for sorting of a plasma membrane ATPase to the vacuolar lumen of Arabidopsis cells.</title>
        <authorList>
            <person name="Herberth S."/>
            <person name="Shahriari M."/>
            <person name="Bruderek M."/>
            <person name="Hessner F."/>
            <person name="Muller B."/>
            <person name="Hulskamp M."/>
            <person name="Schellmann S."/>
        </authorList>
    </citation>
    <scope>FUNCTION</scope>
    <scope>DISRUPTION PHENOTYPE</scope>
    <source>
        <strain>cv. Columbia</strain>
    </source>
</reference>
<reference key="11">
    <citation type="journal article" date="2013" name="J. Exp. Bot.">
        <title>Suppressor of K+ transport growth defect 1 (SKD1) interacts with RING-type ubiquitin ligase and sucrose non-fermenting 1-related protein kinase (SnRK1) in the halophyte ice plant.</title>
        <authorList>
            <person name="Chiang C.-P."/>
            <person name="Li C.-H."/>
            <person name="Jou Y."/>
            <person name="Chen Y.-C."/>
            <person name="Lin Y.-C."/>
            <person name="Yang F.-Y."/>
            <person name="Huang N.-C."/>
            <person name="Yen H.E."/>
        </authorList>
    </citation>
    <scope>FUNCTION</scope>
    <scope>DISRUPTION PHENOTYPE</scope>
</reference>
<reference key="12">
    <citation type="journal article" date="2014" name="J. Biol. Chem.">
        <title>A novel endosomal sorting complex required for transport (ESCRT) component in Arabidopsis thaliana controls cell expansion and development.</title>
        <authorList>
            <person name="Reyes F.C."/>
            <person name="Buono R.A."/>
            <person name="Roschzttardtz H."/>
            <person name="Di Rubbo S."/>
            <person name="Yeun L.H."/>
            <person name="Russinova E."/>
            <person name="Otegui M.S."/>
        </authorList>
    </citation>
    <scope>FUNCTION</scope>
    <scope>CATALYTIC ACTIVITY</scope>
    <scope>MUTAGENESIS OF LEU-63</scope>
    <scope>ACTIVITY REGULATION</scope>
    <scope>INTERACTION WITH PROS/AT4G24370</scope>
</reference>
<reference key="13">
    <citation type="journal article" date="2014" name="Plant Physiol.">
        <title>The Arabidopsis endosomal sorting complex required for transport III regulates internal vesicle formation of the prevacuolar compartment and is required for plant development.</title>
        <authorList>
            <person name="Cai Y."/>
            <person name="Zhuang X."/>
            <person name="Gao C."/>
            <person name="Wang X."/>
            <person name="Jiang L."/>
        </authorList>
    </citation>
    <scope>FUNCTION</scope>
    <scope>MUTAGENESIS OF GLU-232</scope>
    <scope>INTERACTION WITH VPS20.1; VPS32.2 AND VPS2.1</scope>
    <scope>REVIEW ON ESCRT-III</scope>
</reference>
<reference key="14">
    <citation type="journal article" date="2014" name="PLoS Pathog.">
        <title>Arabidopsis LIP5, a positive regulator of multivesicular body biogenesis, is a critical target of pathogen-responsive MAPK cascade in plant basal defense.</title>
        <authorList>
            <person name="Wang F."/>
            <person name="Shang Y."/>
            <person name="Fan B."/>
            <person name="Yu J.-Q."/>
            <person name="Chen Z."/>
        </authorList>
    </citation>
    <scope>INTERACTION WITH LIP5</scope>
    <scope>INDUCTION BY PSEUDOMONAS SYRINGAE</scope>
    <scope>SUBCELLULAR LOCATION</scope>
</reference>
<gene>
    <name evidence="15" type="primary">SKD1</name>
    <name evidence="15" type="synonym">VPS4</name>
    <name evidence="18" type="ordered locus">At2g27600</name>
    <name evidence="20" type="ORF">F10A12.27</name>
    <name evidence="19" type="ORF">F15K20</name>
</gene>
<dbReference type="EC" id="3.6.4.6" evidence="6 8 12"/>
<dbReference type="EMBL" id="AC005824">
    <property type="protein sequence ID" value="AAC73040.1"/>
    <property type="molecule type" value="Genomic_DNA"/>
</dbReference>
<dbReference type="EMBL" id="AC006232">
    <property type="protein sequence ID" value="AAM15184.1"/>
    <property type="molecule type" value="Genomic_DNA"/>
</dbReference>
<dbReference type="EMBL" id="CP002685">
    <property type="protein sequence ID" value="AEC08019.1"/>
    <property type="molecule type" value="Genomic_DNA"/>
</dbReference>
<dbReference type="EMBL" id="AF367297">
    <property type="protein sequence ID" value="AAK32884.1"/>
    <property type="molecule type" value="mRNA"/>
</dbReference>
<dbReference type="EMBL" id="AY091684">
    <property type="protein sequence ID" value="AAM10283.1"/>
    <property type="molecule type" value="mRNA"/>
</dbReference>
<dbReference type="EMBL" id="AY087749">
    <property type="protein sequence ID" value="AAM65285.1"/>
    <property type="molecule type" value="mRNA"/>
</dbReference>
<dbReference type="PIR" id="F84674">
    <property type="entry name" value="F84674"/>
</dbReference>
<dbReference type="RefSeq" id="NP_180328.1">
    <property type="nucleotide sequence ID" value="NM_128319.4"/>
</dbReference>
<dbReference type="SMR" id="Q9ZNT0"/>
<dbReference type="FunCoup" id="Q9ZNT0">
    <property type="interactions" value="4763"/>
</dbReference>
<dbReference type="IntAct" id="Q9ZNT0">
    <property type="interactions" value="4"/>
</dbReference>
<dbReference type="STRING" id="3702.Q9ZNT0"/>
<dbReference type="TCDB" id="3.A.31.1.2">
    <property type="family name" value="the endosomal sorting complexes required for transport iii (escrt-iii) family"/>
</dbReference>
<dbReference type="PaxDb" id="3702-AT2G27600.1"/>
<dbReference type="ProteomicsDB" id="242683"/>
<dbReference type="EnsemblPlants" id="AT2G27600.1">
    <property type="protein sequence ID" value="AT2G27600.1"/>
    <property type="gene ID" value="AT2G27600"/>
</dbReference>
<dbReference type="GeneID" id="817306"/>
<dbReference type="Gramene" id="AT2G27600.1">
    <property type="protein sequence ID" value="AT2G27600.1"/>
    <property type="gene ID" value="AT2G27600"/>
</dbReference>
<dbReference type="KEGG" id="ath:AT2G27600"/>
<dbReference type="Araport" id="AT2G27600"/>
<dbReference type="TAIR" id="AT2G27600">
    <property type="gene designation" value="SKD1"/>
</dbReference>
<dbReference type="eggNOG" id="KOG0739">
    <property type="taxonomic scope" value="Eukaryota"/>
</dbReference>
<dbReference type="HOGENOM" id="CLU_000688_21_2_1"/>
<dbReference type="InParanoid" id="Q9ZNT0"/>
<dbReference type="OMA" id="RCYEHAI"/>
<dbReference type="OrthoDB" id="1047660at2759"/>
<dbReference type="PhylomeDB" id="Q9ZNT0"/>
<dbReference type="BRENDA" id="3.6.4.6">
    <property type="organism ID" value="399"/>
</dbReference>
<dbReference type="SABIO-RK" id="Q9ZNT0"/>
<dbReference type="PRO" id="PR:Q9ZNT0"/>
<dbReference type="Proteomes" id="UP000006548">
    <property type="component" value="Chromosome 2"/>
</dbReference>
<dbReference type="ExpressionAtlas" id="Q9ZNT0">
    <property type="expression patterns" value="baseline and differential"/>
</dbReference>
<dbReference type="GO" id="GO:0005737">
    <property type="term" value="C:cytoplasm"/>
    <property type="evidence" value="ECO:0000314"/>
    <property type="project" value="TAIR"/>
</dbReference>
<dbReference type="GO" id="GO:0005771">
    <property type="term" value="C:multivesicular body"/>
    <property type="evidence" value="ECO:0000314"/>
    <property type="project" value="UniProtKB"/>
</dbReference>
<dbReference type="GO" id="GO:0032585">
    <property type="term" value="C:multivesicular body membrane"/>
    <property type="evidence" value="ECO:0007669"/>
    <property type="project" value="UniProtKB-SubCell"/>
</dbReference>
<dbReference type="GO" id="GO:0005634">
    <property type="term" value="C:nucleus"/>
    <property type="evidence" value="ECO:0000314"/>
    <property type="project" value="TAIR"/>
</dbReference>
<dbReference type="GO" id="GO:0005777">
    <property type="term" value="C:peroxisome"/>
    <property type="evidence" value="ECO:0007005"/>
    <property type="project" value="TAIR"/>
</dbReference>
<dbReference type="GO" id="GO:0009506">
    <property type="term" value="C:plasmodesma"/>
    <property type="evidence" value="ECO:0007005"/>
    <property type="project" value="TAIR"/>
</dbReference>
<dbReference type="GO" id="GO:0005524">
    <property type="term" value="F:ATP binding"/>
    <property type="evidence" value="ECO:0007669"/>
    <property type="project" value="UniProtKB-KW"/>
</dbReference>
<dbReference type="GO" id="GO:0016887">
    <property type="term" value="F:ATP hydrolysis activity"/>
    <property type="evidence" value="ECO:0007669"/>
    <property type="project" value="InterPro"/>
</dbReference>
<dbReference type="GO" id="GO:0007032">
    <property type="term" value="P:endosome organization"/>
    <property type="evidence" value="ECO:0000315"/>
    <property type="project" value="TAIR"/>
</dbReference>
<dbReference type="GO" id="GO:0055075">
    <property type="term" value="P:potassium ion homeostasis"/>
    <property type="evidence" value="ECO:0000304"/>
    <property type="project" value="UniProtKB"/>
</dbReference>
<dbReference type="GO" id="GO:0015031">
    <property type="term" value="P:protein transport"/>
    <property type="evidence" value="ECO:0007669"/>
    <property type="project" value="UniProtKB-KW"/>
</dbReference>
<dbReference type="GO" id="GO:0055078">
    <property type="term" value="P:sodium ion homeostasis"/>
    <property type="evidence" value="ECO:0000304"/>
    <property type="project" value="UniProtKB"/>
</dbReference>
<dbReference type="GO" id="GO:0010091">
    <property type="term" value="P:trichome branching"/>
    <property type="evidence" value="ECO:0000315"/>
    <property type="project" value="TAIR"/>
</dbReference>
<dbReference type="GO" id="GO:0007033">
    <property type="term" value="P:vacuole organization"/>
    <property type="evidence" value="ECO:0000315"/>
    <property type="project" value="TAIR"/>
</dbReference>
<dbReference type="GO" id="GO:0016192">
    <property type="term" value="P:vesicle-mediated transport"/>
    <property type="evidence" value="ECO:0000315"/>
    <property type="project" value="TAIR"/>
</dbReference>
<dbReference type="CDD" id="cd02678">
    <property type="entry name" value="MIT_VPS4"/>
    <property type="match status" value="1"/>
</dbReference>
<dbReference type="CDD" id="cd19521">
    <property type="entry name" value="RecA-like_VPS4"/>
    <property type="match status" value="1"/>
</dbReference>
<dbReference type="FunFam" id="1.20.58.80:FF:000007">
    <property type="entry name" value="Suppressor of K+ transport growth defect 1"/>
    <property type="match status" value="1"/>
</dbReference>
<dbReference type="FunFam" id="3.40.50.300:FF:000043">
    <property type="entry name" value="Vacuolar protein sorting-associated protein 4"/>
    <property type="match status" value="1"/>
</dbReference>
<dbReference type="FunFam" id="1.10.8.60:FF:000015">
    <property type="entry name" value="vacuolar protein sorting-associated protein 4A"/>
    <property type="match status" value="1"/>
</dbReference>
<dbReference type="Gene3D" id="1.10.8.60">
    <property type="match status" value="1"/>
</dbReference>
<dbReference type="Gene3D" id="3.40.50.300">
    <property type="entry name" value="P-loop containing nucleotide triphosphate hydrolases"/>
    <property type="match status" value="1"/>
</dbReference>
<dbReference type="Gene3D" id="1.20.58.80">
    <property type="entry name" value="Phosphotransferase system, lactose/cellobiose-type IIA subunit"/>
    <property type="match status" value="1"/>
</dbReference>
<dbReference type="InterPro" id="IPR003593">
    <property type="entry name" value="AAA+_ATPase"/>
</dbReference>
<dbReference type="InterPro" id="IPR003959">
    <property type="entry name" value="ATPase_AAA_core"/>
</dbReference>
<dbReference type="InterPro" id="IPR003960">
    <property type="entry name" value="ATPase_AAA_CS"/>
</dbReference>
<dbReference type="InterPro" id="IPR007330">
    <property type="entry name" value="MIT_dom"/>
</dbReference>
<dbReference type="InterPro" id="IPR036181">
    <property type="entry name" value="MIT_dom_sf"/>
</dbReference>
<dbReference type="InterPro" id="IPR050304">
    <property type="entry name" value="MT-severing_AAA_ATPase"/>
</dbReference>
<dbReference type="InterPro" id="IPR027417">
    <property type="entry name" value="P-loop_NTPase"/>
</dbReference>
<dbReference type="InterPro" id="IPR015415">
    <property type="entry name" value="Spast_Vps4_C"/>
</dbReference>
<dbReference type="InterPro" id="IPR045253">
    <property type="entry name" value="VPS4_MIT"/>
</dbReference>
<dbReference type="PANTHER" id="PTHR23074">
    <property type="entry name" value="AAA DOMAIN-CONTAINING"/>
    <property type="match status" value="1"/>
</dbReference>
<dbReference type="PANTHER" id="PTHR23074:SF159">
    <property type="entry name" value="PROTEIN SUPPRESSOR OF K(+) TRANSPORT GROWTH DEFECT 1"/>
    <property type="match status" value="1"/>
</dbReference>
<dbReference type="Pfam" id="PF00004">
    <property type="entry name" value="AAA"/>
    <property type="match status" value="1"/>
</dbReference>
<dbReference type="Pfam" id="PF04212">
    <property type="entry name" value="MIT"/>
    <property type="match status" value="1"/>
</dbReference>
<dbReference type="Pfam" id="PF09336">
    <property type="entry name" value="Vps4_C"/>
    <property type="match status" value="1"/>
</dbReference>
<dbReference type="SMART" id="SM00382">
    <property type="entry name" value="AAA"/>
    <property type="match status" value="1"/>
</dbReference>
<dbReference type="SMART" id="SM00745">
    <property type="entry name" value="MIT"/>
    <property type="match status" value="1"/>
</dbReference>
<dbReference type="SUPFAM" id="SSF116846">
    <property type="entry name" value="MIT domain"/>
    <property type="match status" value="1"/>
</dbReference>
<dbReference type="SUPFAM" id="SSF52540">
    <property type="entry name" value="P-loop containing nucleoside triphosphate hydrolases"/>
    <property type="match status" value="1"/>
</dbReference>
<dbReference type="PROSITE" id="PS00674">
    <property type="entry name" value="AAA"/>
    <property type="match status" value="1"/>
</dbReference>
<name>VPS4_ARATH</name>
<protein>
    <recommendedName>
        <fullName evidence="15">Protein SUPPRESSOR OF K(+) TRANSPORT GROWTH DEFECT 1</fullName>
        <shortName evidence="15">AtSKD1</shortName>
        <ecNumber evidence="6 8 12">3.6.4.6</ecNumber>
    </recommendedName>
    <alternativeName>
        <fullName evidence="15">Protein VACUOLAR PROTEIN SORTING 4</fullName>
    </alternativeName>
</protein>
<feature type="chain" id="PRO_0000431528" description="Protein SUPPRESSOR OF K(+) TRANSPORT GROWTH DEFECT 1">
    <location>
        <begin position="1"/>
        <end position="435"/>
    </location>
</feature>
<feature type="domain" description="MIT" evidence="4">
    <location>
        <begin position="7"/>
        <end position="72"/>
    </location>
</feature>
<feature type="region of interest" description="Disordered" evidence="5">
    <location>
        <begin position="73"/>
        <end position="113"/>
    </location>
</feature>
<feature type="compositionally biased region" description="Basic and acidic residues" evidence="5">
    <location>
        <begin position="95"/>
        <end position="113"/>
    </location>
</feature>
<feature type="binding site" evidence="17">
    <location>
        <begin position="172"/>
        <end position="179"/>
    </location>
    <ligand>
        <name>ATP</name>
        <dbReference type="ChEBI" id="CHEBI:30616"/>
    </ligand>
</feature>
<feature type="mutagenesis site" description="Impaired PROS/At4g24370 interaction." evidence="12">
    <original>L</original>
    <variation>A</variation>
    <location>
        <position position="63"/>
    </location>
</feature>
<feature type="mutagenesis site" description="Loss of ATP binding and ATPase activity. Pale seeds, transparent testa phenotype caused by a lack of proanthocyanidin (PA) and mucilage defect in seed coat." evidence="8 9">
    <original>K</original>
    <variation>A</variation>
    <location>
        <position position="178"/>
    </location>
</feature>
<feature type="mutagenesis site" description="Loss of ATPase activity. Enlarged endosomes with a reduced number of internal vesicles, as well as abnormal localization of ESCRT-III subunits. Pale seeds, transparent testa phenotype caused by a lack of proanthocyanidin (PA) and mucilage defect in seed coat." evidence="6 8 9 13">
    <original>E</original>
    <variation>Q</variation>
    <location>
        <position position="232"/>
    </location>
</feature>
<feature type="sequence conflict" description="In Ref. 4; AAM65285." evidence="17" ref="4">
    <location>
        <position position="394"/>
    </location>
</feature>
<comment type="function">
    <text evidence="6 8 9 10 11 12 13 16">Involved in the transport of biosynthetic membrane proteins from the prevacuolar/endosomal compartment to the vacuole. Required for multivesicular body (MVB) protein sorting. Catalyzes the ATP-dependent dissociation of class E VPS proteins from endosomal membranes, such as the disassembly of the ESCRT-III complex (PubMed:17468262, PubMed:20663085, PubMed:21810997, PubMed:22258747, PubMed:24812106). May also regulate cell cycle (PubMed:20663085). Required during seed development for the formation of mucilage in seed coat and testa (PubMed:20930567). Involved in the maintenance of Na(+)/K(+) homeostasis under salt stress (PubMed:23580756). Required for cell expansion (PubMed:24385429).</text>
</comment>
<comment type="catalytic activity">
    <reaction evidence="6 8 12">
        <text>ATP + H2O = ADP + phosphate + H(+)</text>
        <dbReference type="Rhea" id="RHEA:13065"/>
        <dbReference type="ChEBI" id="CHEBI:15377"/>
        <dbReference type="ChEBI" id="CHEBI:15378"/>
        <dbReference type="ChEBI" id="CHEBI:30616"/>
        <dbReference type="ChEBI" id="CHEBI:43474"/>
        <dbReference type="ChEBI" id="CHEBI:456216"/>
        <dbReference type="EC" id="3.6.4.6"/>
    </reaction>
</comment>
<comment type="activity regulation">
    <text evidence="6 12">Activated by LIP5 and PROS.</text>
</comment>
<comment type="biophysicochemical properties">
    <kinetics>
        <KM evidence="8">266 uM for ATP (at pH 7.8 and 30 degrees Celsius)</KM>
        <Vmax evidence="8">1.77 umol/min/mg enzyme with ATP as substrate (at pH 7.8 and 30 degrees Celsius)</Vmax>
    </kinetics>
</comment>
<comment type="subunit">
    <text evidence="3 6 7 8 10 12 13 14">Monomer or homodimer (in nucleotide-free form). Decamer, dodecamer or tetradecamer of two stacked respective homooligomeric rings (when bound to ATP); the dodecameric form seems to be predominant (By similarity). Interacts with members of the ESCRT-III subcomplex such as LIP5, VPS60-1, VPS2.1, VPS20.1, VPS20.2, VPS24-1, VPS32.1, VPS32.2, CHMP1A and VPS24 (PubMed:17468262, PubMed:19304934, PubMed:20663085, PubMed:24812106, PubMed:25010425). Binds to PROS/At4g24370 (PubMed:24385429).</text>
</comment>
<comment type="interaction">
    <interactant intactId="EBI-1606459">
        <id>Q9ZNT0</id>
    </interactant>
    <interactant intactId="EBI-1606558">
        <id>Q9SZ15</id>
        <label>LIP5</label>
    </interactant>
    <organismsDiffer>false</organismsDiffer>
    <experiments>2</experiments>
</comment>
<comment type="subcellular location">
    <subcellularLocation>
        <location evidence="6 8">Cytoplasm</location>
    </subcellularLocation>
    <subcellularLocation>
        <location evidence="8">Nucleus</location>
    </subcellularLocation>
    <subcellularLocation>
        <location evidence="6 8 14">Endosome</location>
        <location evidence="6 8 14">Multivesicular body membrane</location>
        <topology evidence="6 8">Peripheral membrane protein</topology>
    </subcellularLocation>
    <subcellularLocation>
        <location evidence="2">Prevacuolar compartment membrane</location>
        <topology evidence="2">Peripheral membrane protein</topology>
    </subcellularLocation>
    <text evidence="8 14">In young trichome vacuole-free cells, present in the cytosol and in the nucleus. In vacuole-containing cells, present in punctae and large speckles corresponding to prevacuolar compartments (PubMed:20663085). Localized in multivesicular body when associated with LIP5 (PubMed:25010425).</text>
</comment>
<comment type="tissue specificity">
    <text evidence="6 8">Mostly expressed in leaves, to a lower extent in seeds, and barely in roots and flowers (at protein level) (PubMed:17468262). Particularly expressed in trichomes (PubMed:20663085).</text>
</comment>
<comment type="induction">
    <text evidence="14">By Pseudomonas syringae pv. tomato strain DC3000 (PstDC3000).</text>
</comment>
<comment type="domain">
    <text evidence="1">The MIT domain serves as an adapter for ESCRT-III proteins. It forms an asymmetric three-helix bundle that binds amphipathic MIM (MIT interacting motif) helices along the groove between MIT helices 2 and 3 present in a subset of ESCRT-III proteins thus establishing the canonical MIM-MIT interaction. In an extended conformation along the groove between helices 1 and 3, also binds to a type-2 MIT interacting motif (MIM2).</text>
</comment>
<comment type="disruption phenotype">
    <text evidence="8 10 11 16">Normal vacuolar development in early stages of trichome development shortly followed by fragmentation of the large central vacuole which finally disappears completely, associated with the formation of abnormally enlarged late endosomes. Abnormal sorting of vacuolar proteins that are instead secreted. Trichomes contain frequently multiple nuclei (PubMed:20663085). Reduced ESCRT-III disassembly (PubMed:21810997). Blocked vacuolar trafficking (PubMed:22258747). Imbalanced Na(+)/K(+) ratio under salt stress (PubMed:23580756).</text>
</comment>
<comment type="similarity">
    <text evidence="17">Belongs to the AAA ATPase family.</text>
</comment>
<sequence length="435" mass="48593">MYSNFKEQAIEYVKQAVHEDNAGNYNKAFPLYMNALEYFKTHLKYEKNPKIREAITQKFTEYLRRAEEIRAVLDEGGSGPGSNGDAAVATRPKTKPKDGEGGGKDGEDPEQSKLRAGLNSAIVREKPNIKWSDVAGLESAKQALQEAVILPVKFPQFFTGKRRPWRAFLLYGPPGTGKSYLAKAVATEADSTFFSVSSSDLVSKWMGESEKLVSNLFEMARESAPSIIFVDEIDSLCGTRGEGNESEASRRIKTELLVQMQGVGHNDEKVLVLAATNTPYALDQAIRRRFDKRIYIPLPEAKARQHMFKVHLGDTPHNLTEPDFEYLGQKTEGFSGSDVSVCVKDVLFEPVRKTQDAMFFFKSPDGTWMPCGPRHPGAIQTTMQDLATKGLAEKIIPPPITRTDFEKVLARQRPTVSKSDLDVHERFTQEFGEEG</sequence>
<evidence type="ECO:0000250" key="1">
    <source>
        <dbReference type="UniProtKB" id="O75351"/>
    </source>
</evidence>
<evidence type="ECO:0000250" key="2">
    <source>
        <dbReference type="UniProtKB" id="P46467"/>
    </source>
</evidence>
<evidence type="ECO:0000250" key="3">
    <source>
        <dbReference type="UniProtKB" id="P52917"/>
    </source>
</evidence>
<evidence type="ECO:0000255" key="4"/>
<evidence type="ECO:0000256" key="5">
    <source>
        <dbReference type="SAM" id="MobiDB-lite"/>
    </source>
</evidence>
<evidence type="ECO:0000269" key="6">
    <source>
    </source>
</evidence>
<evidence type="ECO:0000269" key="7">
    <source>
    </source>
</evidence>
<evidence type="ECO:0000269" key="8">
    <source>
    </source>
</evidence>
<evidence type="ECO:0000269" key="9">
    <source>
    </source>
</evidence>
<evidence type="ECO:0000269" key="10">
    <source>
    </source>
</evidence>
<evidence type="ECO:0000269" key="11">
    <source>
    </source>
</evidence>
<evidence type="ECO:0000269" key="12">
    <source>
    </source>
</evidence>
<evidence type="ECO:0000269" key="13">
    <source>
    </source>
</evidence>
<evidence type="ECO:0000269" key="14">
    <source>
    </source>
</evidence>
<evidence type="ECO:0000303" key="15">
    <source>
    </source>
</evidence>
<evidence type="ECO:0000303" key="16">
    <source>
    </source>
</evidence>
<evidence type="ECO:0000305" key="17"/>
<evidence type="ECO:0000312" key="18">
    <source>
        <dbReference type="Araport" id="AT2G27600"/>
    </source>
</evidence>
<evidence type="ECO:0000312" key="19">
    <source>
        <dbReference type="EMBL" id="AAC73040.1"/>
    </source>
</evidence>
<evidence type="ECO:0000312" key="20">
    <source>
        <dbReference type="EMBL" id="AAM15184.1"/>
    </source>
</evidence>
<evidence type="ECO:0000312" key="21">
    <source>
        <dbReference type="Proteomes" id="UP000006548"/>
    </source>
</evidence>
<keyword id="KW-0067">ATP-binding</keyword>
<keyword id="KW-0131">Cell cycle</keyword>
<keyword id="KW-0963">Cytoplasm</keyword>
<keyword id="KW-0967">Endosome</keyword>
<keyword id="KW-0378">Hydrolase</keyword>
<keyword id="KW-0472">Membrane</keyword>
<keyword id="KW-0547">Nucleotide-binding</keyword>
<keyword id="KW-0539">Nucleus</keyword>
<keyword id="KW-0653">Protein transport</keyword>
<keyword id="KW-1185">Reference proteome</keyword>
<keyword id="KW-0813">Transport</keyword>